<feature type="chain" id="PRO_0000167722" description="Pyridoxine/pyridoxamine 5'-phosphate oxidase">
    <location>
        <begin position="1"/>
        <end position="220"/>
    </location>
</feature>
<feature type="binding site" evidence="1">
    <location>
        <begin position="13"/>
        <end position="16"/>
    </location>
    <ligand>
        <name>substrate</name>
    </ligand>
</feature>
<feature type="binding site" evidence="1">
    <location>
        <begin position="72"/>
        <end position="77"/>
    </location>
    <ligand>
        <name>FMN</name>
        <dbReference type="ChEBI" id="CHEBI:58210"/>
    </ligand>
</feature>
<feature type="binding site" evidence="1">
    <location>
        <position position="77"/>
    </location>
    <ligand>
        <name>substrate</name>
    </ligand>
</feature>
<feature type="binding site" evidence="1">
    <location>
        <begin position="87"/>
        <end position="88"/>
    </location>
    <ligand>
        <name>FMN</name>
        <dbReference type="ChEBI" id="CHEBI:58210"/>
    </ligand>
</feature>
<feature type="binding site" evidence="1">
    <location>
        <position position="94"/>
    </location>
    <ligand>
        <name>FMN</name>
        <dbReference type="ChEBI" id="CHEBI:58210"/>
    </ligand>
</feature>
<feature type="binding site" evidence="1">
    <location>
        <position position="116"/>
    </location>
    <ligand>
        <name>FMN</name>
        <dbReference type="ChEBI" id="CHEBI:58210"/>
    </ligand>
</feature>
<feature type="binding site" evidence="1">
    <location>
        <position position="134"/>
    </location>
    <ligand>
        <name>substrate</name>
    </ligand>
</feature>
<feature type="binding site" evidence="1">
    <location>
        <position position="138"/>
    </location>
    <ligand>
        <name>substrate</name>
    </ligand>
</feature>
<feature type="binding site" evidence="1">
    <location>
        <position position="142"/>
    </location>
    <ligand>
        <name>substrate</name>
    </ligand>
</feature>
<feature type="binding site" evidence="1">
    <location>
        <begin position="151"/>
        <end position="152"/>
    </location>
    <ligand>
        <name>FMN</name>
        <dbReference type="ChEBI" id="CHEBI:58210"/>
    </ligand>
</feature>
<feature type="binding site" evidence="1">
    <location>
        <position position="197"/>
    </location>
    <ligand>
        <name>FMN</name>
        <dbReference type="ChEBI" id="CHEBI:58210"/>
    </ligand>
</feature>
<feature type="binding site" evidence="1">
    <location>
        <begin position="203"/>
        <end position="205"/>
    </location>
    <ligand>
        <name>substrate</name>
    </ligand>
</feature>
<feature type="binding site" evidence="1">
    <location>
        <position position="207"/>
    </location>
    <ligand>
        <name>FMN</name>
        <dbReference type="ChEBI" id="CHEBI:58210"/>
    </ligand>
</feature>
<accession>Q742K7</accession>
<comment type="function">
    <text evidence="1">Catalyzes the oxidation of either pyridoxine 5'-phosphate (PNP) or pyridoxamine 5'-phosphate (PMP) into pyridoxal 5'-phosphate (PLP).</text>
</comment>
<comment type="catalytic activity">
    <reaction evidence="1">
        <text>pyridoxamine 5'-phosphate + O2 + H2O = pyridoxal 5'-phosphate + H2O2 + NH4(+)</text>
        <dbReference type="Rhea" id="RHEA:15817"/>
        <dbReference type="ChEBI" id="CHEBI:15377"/>
        <dbReference type="ChEBI" id="CHEBI:15379"/>
        <dbReference type="ChEBI" id="CHEBI:16240"/>
        <dbReference type="ChEBI" id="CHEBI:28938"/>
        <dbReference type="ChEBI" id="CHEBI:58451"/>
        <dbReference type="ChEBI" id="CHEBI:597326"/>
        <dbReference type="EC" id="1.4.3.5"/>
    </reaction>
</comment>
<comment type="catalytic activity">
    <reaction evidence="1">
        <text>pyridoxine 5'-phosphate + O2 = pyridoxal 5'-phosphate + H2O2</text>
        <dbReference type="Rhea" id="RHEA:15149"/>
        <dbReference type="ChEBI" id="CHEBI:15379"/>
        <dbReference type="ChEBI" id="CHEBI:16240"/>
        <dbReference type="ChEBI" id="CHEBI:58589"/>
        <dbReference type="ChEBI" id="CHEBI:597326"/>
        <dbReference type="EC" id="1.4.3.5"/>
    </reaction>
</comment>
<comment type="cofactor">
    <cofactor evidence="1">
        <name>FMN</name>
        <dbReference type="ChEBI" id="CHEBI:58210"/>
    </cofactor>
    <text evidence="1">Binds 1 FMN per subunit.</text>
</comment>
<comment type="pathway">
    <text evidence="1">Cofactor metabolism; pyridoxal 5'-phosphate salvage; pyridoxal 5'-phosphate from pyridoxamine 5'-phosphate: step 1/1.</text>
</comment>
<comment type="pathway">
    <text evidence="1">Cofactor metabolism; pyridoxal 5'-phosphate salvage; pyridoxal 5'-phosphate from pyridoxine 5'-phosphate: step 1/1.</text>
</comment>
<comment type="subunit">
    <text evidence="1">Homodimer.</text>
</comment>
<comment type="similarity">
    <text evidence="1">Belongs to the pyridoxamine 5'-phosphate oxidase family.</text>
</comment>
<dbReference type="EC" id="1.4.3.5" evidence="1"/>
<dbReference type="EMBL" id="AE016958">
    <property type="protein sequence ID" value="AAS03145.1"/>
    <property type="molecule type" value="Genomic_DNA"/>
</dbReference>
<dbReference type="SMR" id="Q742K7"/>
<dbReference type="STRING" id="262316.MAP_0828"/>
<dbReference type="KEGG" id="mpa:MAP_0828"/>
<dbReference type="eggNOG" id="COG0259">
    <property type="taxonomic scope" value="Bacteria"/>
</dbReference>
<dbReference type="HOGENOM" id="CLU_032263_2_2_11"/>
<dbReference type="UniPathway" id="UPA01068">
    <property type="reaction ID" value="UER00304"/>
</dbReference>
<dbReference type="UniPathway" id="UPA01068">
    <property type="reaction ID" value="UER00305"/>
</dbReference>
<dbReference type="Proteomes" id="UP000000580">
    <property type="component" value="Chromosome"/>
</dbReference>
<dbReference type="GO" id="GO:0010181">
    <property type="term" value="F:FMN binding"/>
    <property type="evidence" value="ECO:0007669"/>
    <property type="project" value="UniProtKB-UniRule"/>
</dbReference>
<dbReference type="GO" id="GO:0004733">
    <property type="term" value="F:pyridoxamine phosphate oxidase activity"/>
    <property type="evidence" value="ECO:0007669"/>
    <property type="project" value="UniProtKB-UniRule"/>
</dbReference>
<dbReference type="GO" id="GO:0008615">
    <property type="term" value="P:pyridoxine biosynthetic process"/>
    <property type="evidence" value="ECO:0007669"/>
    <property type="project" value="UniProtKB-KW"/>
</dbReference>
<dbReference type="Gene3D" id="2.30.110.10">
    <property type="entry name" value="Electron Transport, Fmn-binding Protein, Chain A"/>
    <property type="match status" value="1"/>
</dbReference>
<dbReference type="HAMAP" id="MF_01629">
    <property type="entry name" value="PdxH"/>
    <property type="match status" value="1"/>
</dbReference>
<dbReference type="InterPro" id="IPR000659">
    <property type="entry name" value="Pyridox_Oxase"/>
</dbReference>
<dbReference type="InterPro" id="IPR019740">
    <property type="entry name" value="Pyridox_Oxase_CS"/>
</dbReference>
<dbReference type="InterPro" id="IPR011576">
    <property type="entry name" value="Pyridox_Oxase_N"/>
</dbReference>
<dbReference type="InterPro" id="IPR019576">
    <property type="entry name" value="Pyridoxamine_oxidase_dimer_C"/>
</dbReference>
<dbReference type="InterPro" id="IPR012349">
    <property type="entry name" value="Split_barrel_FMN-bd"/>
</dbReference>
<dbReference type="NCBIfam" id="TIGR00558">
    <property type="entry name" value="pdxH"/>
    <property type="match status" value="1"/>
</dbReference>
<dbReference type="NCBIfam" id="NF004231">
    <property type="entry name" value="PRK05679.1"/>
    <property type="match status" value="1"/>
</dbReference>
<dbReference type="PANTHER" id="PTHR10851:SF0">
    <property type="entry name" value="PYRIDOXINE-5'-PHOSPHATE OXIDASE"/>
    <property type="match status" value="1"/>
</dbReference>
<dbReference type="PANTHER" id="PTHR10851">
    <property type="entry name" value="PYRIDOXINE-5-PHOSPHATE OXIDASE"/>
    <property type="match status" value="1"/>
</dbReference>
<dbReference type="Pfam" id="PF10590">
    <property type="entry name" value="PNP_phzG_C"/>
    <property type="match status" value="1"/>
</dbReference>
<dbReference type="Pfam" id="PF01243">
    <property type="entry name" value="PNPOx_N"/>
    <property type="match status" value="1"/>
</dbReference>
<dbReference type="PIRSF" id="PIRSF000190">
    <property type="entry name" value="Pyd_amn-ph_oxd"/>
    <property type="match status" value="1"/>
</dbReference>
<dbReference type="SUPFAM" id="SSF50475">
    <property type="entry name" value="FMN-binding split barrel"/>
    <property type="match status" value="1"/>
</dbReference>
<dbReference type="PROSITE" id="PS01064">
    <property type="entry name" value="PYRIDOX_OXIDASE"/>
    <property type="match status" value="1"/>
</dbReference>
<sequence length="220" mass="24551">MPGPADEHLQRMRVEYGSVEKDGSPDLDVDWLDDGWVALLRKWIDDAERAGVAEPNAMVLATVTPDGRPASRTVLCKSLDETGITFFTNYDSAKADDLAATPYAAVTFPWYQLGRQVHLRGPVSKVTAQVTEDYWSKRPRGSQLGAWASQQSRPIASRAALLEQLAQVTARFADHERVPVPPGWGGYLIAADVVEFWQGRENRLHNRIRVTGDRVERLQP</sequence>
<gene>
    <name evidence="1" type="primary">pdxH</name>
    <name type="ordered locus">MAP_0828</name>
</gene>
<proteinExistence type="inferred from homology"/>
<name>PDXH_MYCPA</name>
<reference key="1">
    <citation type="journal article" date="2005" name="Proc. Natl. Acad. Sci. U.S.A.">
        <title>The complete genome sequence of Mycobacterium avium subspecies paratuberculosis.</title>
        <authorList>
            <person name="Li L."/>
            <person name="Bannantine J.P."/>
            <person name="Zhang Q."/>
            <person name="Amonsin A."/>
            <person name="May B.J."/>
            <person name="Alt D."/>
            <person name="Banerji N."/>
            <person name="Kanjilal S."/>
            <person name="Kapur V."/>
        </authorList>
    </citation>
    <scope>NUCLEOTIDE SEQUENCE [LARGE SCALE GENOMIC DNA]</scope>
    <source>
        <strain>ATCC BAA-968 / K-10</strain>
    </source>
</reference>
<protein>
    <recommendedName>
        <fullName evidence="1">Pyridoxine/pyridoxamine 5'-phosphate oxidase</fullName>
        <ecNumber evidence="1">1.4.3.5</ecNumber>
    </recommendedName>
    <alternativeName>
        <fullName evidence="1">PNP/PMP oxidase</fullName>
        <shortName evidence="1">PNPOx</shortName>
    </alternativeName>
    <alternativeName>
        <fullName evidence="1">Pyridoxal 5'-phosphate synthase</fullName>
    </alternativeName>
</protein>
<evidence type="ECO:0000255" key="1">
    <source>
        <dbReference type="HAMAP-Rule" id="MF_01629"/>
    </source>
</evidence>
<keyword id="KW-0285">Flavoprotein</keyword>
<keyword id="KW-0288">FMN</keyword>
<keyword id="KW-0560">Oxidoreductase</keyword>
<keyword id="KW-0664">Pyridoxine biosynthesis</keyword>
<keyword id="KW-1185">Reference proteome</keyword>
<organism>
    <name type="scientific">Mycolicibacterium paratuberculosis (strain ATCC BAA-968 / K-10)</name>
    <name type="common">Mycobacterium paratuberculosis</name>
    <dbReference type="NCBI Taxonomy" id="262316"/>
    <lineage>
        <taxon>Bacteria</taxon>
        <taxon>Bacillati</taxon>
        <taxon>Actinomycetota</taxon>
        <taxon>Actinomycetes</taxon>
        <taxon>Mycobacteriales</taxon>
        <taxon>Mycobacteriaceae</taxon>
        <taxon>Mycobacterium</taxon>
        <taxon>Mycobacterium avium complex (MAC)</taxon>
    </lineage>
</organism>